<proteinExistence type="evidence at protein level"/>
<organism>
    <name type="scientific">Deferribacter desulfuricans (strain DSM 14783 / JCM 11476 / NBRC 101012 / SSM1)</name>
    <dbReference type="NCBI Taxonomy" id="639282"/>
    <lineage>
        <taxon>Bacteria</taxon>
        <taxon>Pseudomonadati</taxon>
        <taxon>Deferribacterota</taxon>
        <taxon>Deferribacteres</taxon>
        <taxon>Deferribacterales</taxon>
        <taxon>Deferribacteraceae</taxon>
        <taxon>Deferribacter</taxon>
    </lineage>
</organism>
<sequence length="377" mass="42708">MKENSVGLVKTKYVTFKDDFYFESGRILSPITVAYETYGKLNEKKDNAILICHALTGSAHAAGYNSPDDQKPGWWDDMIGPGKAFDTDKYFIICSNFLGSCYGTTGPASIDPSTGKPYGLKFPVFTVKDMVKLQKKLIDYLGIEKLLCVAGGSMGGMQALEWAVTFPEKTYSIIPIATAGRITPMAIAFNTIGRFAIMKDPNWMNGDYYGKTFPRDGLAIARMAGHITYMSDKSFHKKFGRRYATFGGIYDFFGYFEVENYLRYNGYKFTERFDANSYLYIIKAMDIFDLSYGYGSYEEAIGRIEADSLFITFTSDFLFPSYQTEEIVNIMKNHGKNPEWVNIESDYGHDAFLLEFDTQTSCIKEFLSKIYNKVANQ</sequence>
<feature type="chain" id="PRO_0000440278" description="Homoserine O-acetyltransferase">
    <location>
        <begin position="1"/>
        <end position="377"/>
    </location>
</feature>
<feature type="domain" description="AB hydrolase-1" evidence="1">
    <location>
        <begin position="47"/>
        <end position="355"/>
    </location>
</feature>
<feature type="active site" description="Nucleophile" evidence="1">
    <location>
        <position position="153"/>
    </location>
</feature>
<feature type="active site" evidence="1">
    <location>
        <position position="316"/>
    </location>
</feature>
<feature type="active site" evidence="1">
    <location>
        <position position="349"/>
    </location>
</feature>
<feature type="binding site" evidence="1">
    <location>
        <position position="222"/>
    </location>
    <ligand>
        <name>substrate</name>
    </ligand>
</feature>
<feature type="binding site" evidence="1">
    <location>
        <position position="350"/>
    </location>
    <ligand>
        <name>substrate</name>
    </ligand>
</feature>
<protein>
    <recommendedName>
        <fullName evidence="1">Homoserine O-acetyltransferase</fullName>
        <shortName evidence="1 3">HAT</shortName>
        <ecNumber evidence="1 2">2.3.1.31</ecNumber>
    </recommendedName>
    <alternativeName>
        <fullName evidence="1">Homoserine transacetylase</fullName>
        <shortName evidence="1">HTA</shortName>
    </alternativeName>
</protein>
<gene>
    <name evidence="1 3" type="primary">metXA</name>
    <name evidence="4" type="ordered locus">DEFDS_1867</name>
</gene>
<keyword id="KW-0012">Acyltransferase</keyword>
<keyword id="KW-0028">Amino-acid biosynthesis</keyword>
<keyword id="KW-0963">Cytoplasm</keyword>
<keyword id="KW-0486">Methionine biosynthesis</keyword>
<keyword id="KW-1185">Reference proteome</keyword>
<keyword id="KW-0808">Transferase</keyword>
<comment type="function">
    <text evidence="1 2">Transfers an acetyl group from acetyl-CoA to L-homoserine, forming acetyl-L-homoserine.</text>
</comment>
<comment type="catalytic activity">
    <reaction evidence="1 2">
        <text>L-homoserine + acetyl-CoA = O-acetyl-L-homoserine + CoA</text>
        <dbReference type="Rhea" id="RHEA:13701"/>
        <dbReference type="ChEBI" id="CHEBI:57287"/>
        <dbReference type="ChEBI" id="CHEBI:57288"/>
        <dbReference type="ChEBI" id="CHEBI:57476"/>
        <dbReference type="ChEBI" id="CHEBI:57716"/>
        <dbReference type="EC" id="2.3.1.31"/>
    </reaction>
</comment>
<comment type="pathway">
    <text evidence="1">Amino-acid biosynthesis; L-methionine biosynthesis via de novo pathway; O-acetyl-L-homoserine from L-homoserine: step 1/1.</text>
</comment>
<comment type="subunit">
    <text evidence="1">Homodimer.</text>
</comment>
<comment type="subcellular location">
    <subcellularLocation>
        <location evidence="1">Cytoplasm</location>
    </subcellularLocation>
</comment>
<comment type="similarity">
    <text evidence="1">Belongs to the AB hydrolase superfamily. MetX family.</text>
</comment>
<dbReference type="EC" id="2.3.1.31" evidence="1 2"/>
<dbReference type="EMBL" id="AP011529">
    <property type="protein sequence ID" value="BAI81321.1"/>
    <property type="molecule type" value="Genomic_DNA"/>
</dbReference>
<dbReference type="RefSeq" id="WP_013008566.1">
    <property type="nucleotide sequence ID" value="NC_013939.1"/>
</dbReference>
<dbReference type="SMR" id="D3P9D1"/>
<dbReference type="STRING" id="639282.DEFDS_1867"/>
<dbReference type="ESTHER" id="defds-metxa">
    <property type="family name" value="Homoserine_transacetylase"/>
</dbReference>
<dbReference type="KEGG" id="ddf:DEFDS_1867"/>
<dbReference type="eggNOG" id="COG2021">
    <property type="taxonomic scope" value="Bacteria"/>
</dbReference>
<dbReference type="HOGENOM" id="CLU_028760_1_2_0"/>
<dbReference type="OrthoDB" id="9800754at2"/>
<dbReference type="UniPathway" id="UPA00051">
    <property type="reaction ID" value="UER00074"/>
</dbReference>
<dbReference type="Proteomes" id="UP000001520">
    <property type="component" value="Chromosome"/>
</dbReference>
<dbReference type="GO" id="GO:0005737">
    <property type="term" value="C:cytoplasm"/>
    <property type="evidence" value="ECO:0007669"/>
    <property type="project" value="UniProtKB-SubCell"/>
</dbReference>
<dbReference type="GO" id="GO:0004414">
    <property type="term" value="F:homoserine O-acetyltransferase activity"/>
    <property type="evidence" value="ECO:0007669"/>
    <property type="project" value="UniProtKB-UniRule"/>
</dbReference>
<dbReference type="GO" id="GO:0009092">
    <property type="term" value="P:homoserine metabolic process"/>
    <property type="evidence" value="ECO:0007669"/>
    <property type="project" value="TreeGrafter"/>
</dbReference>
<dbReference type="GO" id="GO:0009086">
    <property type="term" value="P:methionine biosynthetic process"/>
    <property type="evidence" value="ECO:0007669"/>
    <property type="project" value="UniProtKB-UniRule"/>
</dbReference>
<dbReference type="FunFam" id="1.10.1740.110:FF:000001">
    <property type="entry name" value="Homoserine O-acetyltransferase"/>
    <property type="match status" value="1"/>
</dbReference>
<dbReference type="Gene3D" id="1.10.1740.110">
    <property type="match status" value="1"/>
</dbReference>
<dbReference type="Gene3D" id="3.40.50.1820">
    <property type="entry name" value="alpha/beta hydrolase"/>
    <property type="match status" value="1"/>
</dbReference>
<dbReference type="HAMAP" id="MF_00296">
    <property type="entry name" value="MetX_acyltransf"/>
    <property type="match status" value="1"/>
</dbReference>
<dbReference type="InterPro" id="IPR000073">
    <property type="entry name" value="AB_hydrolase_1"/>
</dbReference>
<dbReference type="InterPro" id="IPR029058">
    <property type="entry name" value="AB_hydrolase_fold"/>
</dbReference>
<dbReference type="InterPro" id="IPR008220">
    <property type="entry name" value="HAT_MetX-like"/>
</dbReference>
<dbReference type="NCBIfam" id="TIGR01392">
    <property type="entry name" value="homoserO_Ac_trn"/>
    <property type="match status" value="1"/>
</dbReference>
<dbReference type="NCBIfam" id="NF001209">
    <property type="entry name" value="PRK00175.1"/>
    <property type="match status" value="1"/>
</dbReference>
<dbReference type="PANTHER" id="PTHR32268">
    <property type="entry name" value="HOMOSERINE O-ACETYLTRANSFERASE"/>
    <property type="match status" value="1"/>
</dbReference>
<dbReference type="PANTHER" id="PTHR32268:SF11">
    <property type="entry name" value="HOMOSERINE O-ACETYLTRANSFERASE"/>
    <property type="match status" value="1"/>
</dbReference>
<dbReference type="Pfam" id="PF00561">
    <property type="entry name" value="Abhydrolase_1"/>
    <property type="match status" value="1"/>
</dbReference>
<dbReference type="PIRSF" id="PIRSF000443">
    <property type="entry name" value="Homoser_Ac_trans"/>
    <property type="match status" value="1"/>
</dbReference>
<dbReference type="SUPFAM" id="SSF53474">
    <property type="entry name" value="alpha/beta-Hydrolases"/>
    <property type="match status" value="1"/>
</dbReference>
<evidence type="ECO:0000255" key="1">
    <source>
        <dbReference type="HAMAP-Rule" id="MF_00296"/>
    </source>
</evidence>
<evidence type="ECO:0000269" key="2">
    <source>
    </source>
</evidence>
<evidence type="ECO:0000303" key="3">
    <source>
    </source>
</evidence>
<evidence type="ECO:0000312" key="4">
    <source>
        <dbReference type="EMBL" id="BAI81321.1"/>
    </source>
</evidence>
<name>METXA_DEFDS</name>
<accession>D3P9D1</accession>
<reference key="1">
    <citation type="journal article" date="2010" name="DNA Res.">
        <title>Bacterial lifestyle in a deep-sea hydrothermal vent chimney revealed by the genome sequence of the thermophilic bacterium Deferribacter desulfuricans SSM1.</title>
        <authorList>
            <person name="Takaki Y."/>
            <person name="Shimamura S."/>
            <person name="Nakagawa S."/>
            <person name="Fukuhara Y."/>
            <person name="Horikawa H."/>
            <person name="Ankai A."/>
            <person name="Harada T."/>
            <person name="Hosoyama A."/>
            <person name="Oguchi A."/>
            <person name="Fukui S."/>
            <person name="Fujita N."/>
            <person name="Takami H."/>
            <person name="Takai K."/>
        </authorList>
    </citation>
    <scope>NUCLEOTIDE SEQUENCE [LARGE SCALE GENOMIC DNA]</scope>
    <source>
        <strain>DSM 14783 / JCM 11476 / NBRC 101012 / SSM1</strain>
    </source>
</reference>
<reference key="2">
    <citation type="journal article" date="2017" name="Nat. Chem. Biol.">
        <title>Parallel evolution of non-homologous isofunctional enzymes in methionine biosynthesis.</title>
        <authorList>
            <person name="Bastard K."/>
            <person name="Perret A."/>
            <person name="Mariage A."/>
            <person name="Bessonnet T."/>
            <person name="Pinet-Turpault A."/>
            <person name="Petit J.L."/>
            <person name="Darii E."/>
            <person name="Bazire P."/>
            <person name="Vergne-Vaxelaire C."/>
            <person name="Brewee C."/>
            <person name="Debard A."/>
            <person name="Pellouin V."/>
            <person name="Besnard-Gonnet M."/>
            <person name="Artiguenave F."/>
            <person name="Medigue C."/>
            <person name="Vallenet D."/>
            <person name="Danchin A."/>
            <person name="Zaparucha A."/>
            <person name="Weissenbach J."/>
            <person name="Salanoubat M."/>
            <person name="de Berardinis V."/>
        </authorList>
    </citation>
    <scope>FUNCTION</scope>
    <scope>CATALYTIC ACTIVITY</scope>
</reference>